<name>ILVH_GALSU</name>
<protein>
    <recommendedName>
        <fullName>Acetolactate synthase small subunit</fullName>
        <ecNumber>2.2.1.6</ecNumber>
    </recommendedName>
    <alternativeName>
        <fullName>Acetohydroxy-acid synthase small subunit</fullName>
        <shortName>AHAS</shortName>
        <shortName>ALS</shortName>
    </alternativeName>
</protein>
<evidence type="ECO:0000250" key="1"/>
<evidence type="ECO:0000255" key="2">
    <source>
        <dbReference type="PROSITE-ProRule" id="PRU01007"/>
    </source>
</evidence>
<evidence type="ECO:0000305" key="3"/>
<organism>
    <name type="scientific">Galdieria sulphuraria</name>
    <name type="common">Red alga</name>
    <dbReference type="NCBI Taxonomy" id="130081"/>
    <lineage>
        <taxon>Eukaryota</taxon>
        <taxon>Rhodophyta</taxon>
        <taxon>Bangiophyceae</taxon>
        <taxon>Galdieriales</taxon>
        <taxon>Galdieriaceae</taxon>
        <taxon>Galdieria</taxon>
    </lineage>
</organism>
<gene>
    <name type="primary">ilvH</name>
</gene>
<feature type="chain" id="PRO_0000151426" description="Acetolactate synthase small subunit">
    <location>
        <begin position="1"/>
        <end position="181"/>
    </location>
</feature>
<feature type="domain" description="ACT" evidence="2">
    <location>
        <begin position="4"/>
        <end position="78"/>
    </location>
</feature>
<proteinExistence type="inferred from homology"/>
<dbReference type="EC" id="2.2.1.6"/>
<dbReference type="EMBL" id="AF233069">
    <property type="protein sequence ID" value="AAF81684.1"/>
    <property type="molecule type" value="Genomic_DNA"/>
</dbReference>
<dbReference type="SMR" id="Q9MS98"/>
<dbReference type="eggNOG" id="KOG2663">
    <property type="taxonomic scope" value="Eukaryota"/>
</dbReference>
<dbReference type="UniPathway" id="UPA00047">
    <property type="reaction ID" value="UER00055"/>
</dbReference>
<dbReference type="UniPathway" id="UPA00049">
    <property type="reaction ID" value="UER00059"/>
</dbReference>
<dbReference type="GO" id="GO:0009507">
    <property type="term" value="C:chloroplast"/>
    <property type="evidence" value="ECO:0007669"/>
    <property type="project" value="UniProtKB-SubCell"/>
</dbReference>
<dbReference type="GO" id="GO:0005829">
    <property type="term" value="C:cytosol"/>
    <property type="evidence" value="ECO:0007669"/>
    <property type="project" value="TreeGrafter"/>
</dbReference>
<dbReference type="GO" id="GO:0003984">
    <property type="term" value="F:acetolactate synthase activity"/>
    <property type="evidence" value="ECO:0007669"/>
    <property type="project" value="UniProtKB-EC"/>
</dbReference>
<dbReference type="GO" id="GO:1990610">
    <property type="term" value="F:acetolactate synthase regulator activity"/>
    <property type="evidence" value="ECO:0007669"/>
    <property type="project" value="InterPro"/>
</dbReference>
<dbReference type="GO" id="GO:0009097">
    <property type="term" value="P:isoleucine biosynthetic process"/>
    <property type="evidence" value="ECO:0007669"/>
    <property type="project" value="UniProtKB-UniPathway"/>
</dbReference>
<dbReference type="GO" id="GO:0009099">
    <property type="term" value="P:L-valine biosynthetic process"/>
    <property type="evidence" value="ECO:0007669"/>
    <property type="project" value="UniProtKB-UniPathway"/>
</dbReference>
<dbReference type="CDD" id="cd04878">
    <property type="entry name" value="ACT_AHAS"/>
    <property type="match status" value="1"/>
</dbReference>
<dbReference type="FunFam" id="3.30.70.1150:FF:000001">
    <property type="entry name" value="Acetolactate synthase small subunit"/>
    <property type="match status" value="1"/>
</dbReference>
<dbReference type="FunFam" id="3.30.70.260:FF:000001">
    <property type="entry name" value="Acetolactate synthase, small subunit"/>
    <property type="match status" value="1"/>
</dbReference>
<dbReference type="Gene3D" id="3.30.70.260">
    <property type="match status" value="1"/>
</dbReference>
<dbReference type="Gene3D" id="3.30.70.1150">
    <property type="entry name" value="ACT-like. Chain A, domain 2"/>
    <property type="match status" value="1"/>
</dbReference>
<dbReference type="InterPro" id="IPR004789">
    <property type="entry name" value="Acetalactate_synth_ssu"/>
</dbReference>
<dbReference type="InterPro" id="IPR027271">
    <property type="entry name" value="Acetolactate_synth/TF_NikR_C"/>
</dbReference>
<dbReference type="InterPro" id="IPR019455">
    <property type="entry name" value="Acetolactate_synth_ssu_C"/>
</dbReference>
<dbReference type="InterPro" id="IPR045865">
    <property type="entry name" value="ACT-like_dom_sf"/>
</dbReference>
<dbReference type="InterPro" id="IPR002912">
    <property type="entry name" value="ACT_dom"/>
</dbReference>
<dbReference type="InterPro" id="IPR039557">
    <property type="entry name" value="AHAS_ACT"/>
</dbReference>
<dbReference type="InterPro" id="IPR054480">
    <property type="entry name" value="AHAS_small-like_ACT"/>
</dbReference>
<dbReference type="NCBIfam" id="TIGR00119">
    <property type="entry name" value="acolac_sm"/>
    <property type="match status" value="1"/>
</dbReference>
<dbReference type="NCBIfam" id="NF008864">
    <property type="entry name" value="PRK11895.1"/>
    <property type="match status" value="1"/>
</dbReference>
<dbReference type="PANTHER" id="PTHR30239">
    <property type="entry name" value="ACETOLACTATE SYNTHASE SMALL SUBUNIT"/>
    <property type="match status" value="1"/>
</dbReference>
<dbReference type="PANTHER" id="PTHR30239:SF0">
    <property type="entry name" value="ACETOLACTATE SYNTHASE SMALL SUBUNIT 1, CHLOROPLASTIC"/>
    <property type="match status" value="1"/>
</dbReference>
<dbReference type="Pfam" id="PF22629">
    <property type="entry name" value="ACT_AHAS_ss"/>
    <property type="match status" value="1"/>
</dbReference>
<dbReference type="Pfam" id="PF10369">
    <property type="entry name" value="ALS_ss_C"/>
    <property type="match status" value="1"/>
</dbReference>
<dbReference type="SUPFAM" id="SSF55021">
    <property type="entry name" value="ACT-like"/>
    <property type="match status" value="2"/>
</dbReference>
<dbReference type="PROSITE" id="PS51671">
    <property type="entry name" value="ACT"/>
    <property type="match status" value="1"/>
</dbReference>
<sequence length="181" mass="20196">MKHTLSVLVEDESGVLTRISGLFARRGFNIDSLAVGPAEKAGISRITMVIRGDNRIIEQITKHLYKLVNVLKIQDITNIPCVERELMLIKVKTGENKRNEILEIANIFRARVVDLSESFIILEITGDPGKIAAIEKLLEKYGICEIARTGKIALTRESKINTEILRLNTMINNDKIRGGGT</sequence>
<keyword id="KW-0028">Amino-acid biosynthesis</keyword>
<keyword id="KW-0100">Branched-chain amino acid biosynthesis</keyword>
<keyword id="KW-0150">Chloroplast</keyword>
<keyword id="KW-0934">Plastid</keyword>
<keyword id="KW-0808">Transferase</keyword>
<geneLocation type="chloroplast"/>
<accession>Q9MS98</accession>
<reference key="1">
    <citation type="submission" date="2000-02" db="EMBL/GenBank/DDBJ databases">
        <authorList>
            <person name="Whitney S.M."/>
            <person name="Andrews J."/>
        </authorList>
    </citation>
    <scope>NUCLEOTIDE SEQUENCE [GENOMIC DNA]</scope>
    <source>
        <strain>UTEX 2393</strain>
    </source>
</reference>
<comment type="catalytic activity">
    <reaction>
        <text>2 pyruvate + H(+) = (2S)-2-acetolactate + CO2</text>
        <dbReference type="Rhea" id="RHEA:25249"/>
        <dbReference type="ChEBI" id="CHEBI:15361"/>
        <dbReference type="ChEBI" id="CHEBI:15378"/>
        <dbReference type="ChEBI" id="CHEBI:16526"/>
        <dbReference type="ChEBI" id="CHEBI:58476"/>
        <dbReference type="EC" id="2.2.1.6"/>
    </reaction>
</comment>
<comment type="pathway">
    <text>Amino-acid biosynthesis; L-isoleucine biosynthesis; L-isoleucine from 2-oxobutanoate: step 1/4.</text>
</comment>
<comment type="pathway">
    <text>Amino-acid biosynthesis; L-valine biosynthesis; L-valine from pyruvate: step 1/4.</text>
</comment>
<comment type="subunit">
    <text evidence="1">Dimer of large and small chains.</text>
</comment>
<comment type="subcellular location">
    <subcellularLocation>
        <location>Plastid</location>
        <location>Chloroplast</location>
    </subcellularLocation>
</comment>
<comment type="similarity">
    <text evidence="3">Belongs to the acetolactate synthase small subunit family.</text>
</comment>